<protein>
    <recommendedName>
        <fullName evidence="1">ATP-dependent (S)-NAD(P)H-hydrate dehydratase</fullName>
        <ecNumber evidence="1">4.2.1.93</ecNumber>
    </recommendedName>
    <alternativeName>
        <fullName evidence="1">ATP-dependent NAD(P)HX dehydratase</fullName>
    </alternativeName>
</protein>
<reference key="1">
    <citation type="submission" date="2008-03" db="EMBL/GenBank/DDBJ databases">
        <title>Annotation of Ixodes scapularis.</title>
        <authorList>
            <consortium name="Ixodes scapularis Genome Project Consortium"/>
            <person name="Caler E."/>
            <person name="Hannick L.I."/>
            <person name="Bidwell S."/>
            <person name="Joardar V."/>
            <person name="Thiagarajan M."/>
            <person name="Amedeo P."/>
            <person name="Galinsky K.J."/>
            <person name="Schobel S."/>
            <person name="Inman J."/>
            <person name="Hostetler J."/>
            <person name="Miller J."/>
            <person name="Hammond M."/>
            <person name="Megy K."/>
            <person name="Lawson D."/>
            <person name="Kodira C."/>
            <person name="Sutton G."/>
            <person name="Meyer J."/>
            <person name="Hill C.A."/>
            <person name="Birren B."/>
            <person name="Nene V."/>
            <person name="Collins F."/>
            <person name="Alarcon-Chaidez F."/>
            <person name="Wikel S."/>
            <person name="Strausberg R."/>
        </authorList>
    </citation>
    <scope>NUCLEOTIDE SEQUENCE [LARGE SCALE GENOMIC DNA]</scope>
    <source>
        <strain>Wikel</strain>
    </source>
</reference>
<keyword id="KW-0067">ATP-binding</keyword>
<keyword id="KW-0456">Lyase</keyword>
<keyword id="KW-0520">NAD</keyword>
<keyword id="KW-0521">NADP</keyword>
<keyword id="KW-0547">Nucleotide-binding</keyword>
<keyword id="KW-0597">Phosphoprotein</keyword>
<keyword id="KW-1185">Reference proteome</keyword>
<feature type="chain" id="PRO_0000416167" description="ATP-dependent (S)-NAD(P)H-hydrate dehydratase">
    <location>
        <begin position="1"/>
        <end position="303"/>
    </location>
</feature>
<feature type="domain" description="YjeF C-terminal" evidence="1">
    <location>
        <begin position="12"/>
        <end position="299"/>
    </location>
</feature>
<feature type="binding site" evidence="1">
    <location>
        <position position="106"/>
    </location>
    <ligand>
        <name>(6S)-NADPHX</name>
        <dbReference type="ChEBI" id="CHEBI:64076"/>
    </ligand>
</feature>
<feature type="binding site" evidence="1">
    <location>
        <begin position="158"/>
        <end position="164"/>
    </location>
    <ligand>
        <name>(6S)-NADPHX</name>
        <dbReference type="ChEBI" id="CHEBI:64076"/>
    </ligand>
</feature>
<feature type="binding site" evidence="1">
    <location>
        <begin position="194"/>
        <end position="198"/>
    </location>
    <ligand>
        <name>ATP</name>
        <dbReference type="ChEBI" id="CHEBI:30616"/>
    </ligand>
</feature>
<feature type="binding site" evidence="1">
    <location>
        <begin position="213"/>
        <end position="222"/>
    </location>
    <ligand>
        <name>ATP</name>
        <dbReference type="ChEBI" id="CHEBI:30616"/>
    </ligand>
</feature>
<feature type="binding site" evidence="1">
    <location>
        <position position="223"/>
    </location>
    <ligand>
        <name>(6S)-NADPHX</name>
        <dbReference type="ChEBI" id="CHEBI:64076"/>
    </ligand>
</feature>
<dbReference type="EC" id="4.2.1.93" evidence="1"/>
<dbReference type="EMBL" id="DS676278">
    <property type="protein sequence ID" value="EEC03957.1"/>
    <property type="molecule type" value="Genomic_DNA"/>
</dbReference>
<dbReference type="RefSeq" id="XP_002408179.1">
    <property type="nucleotide sequence ID" value="XM_002408135.1"/>
</dbReference>
<dbReference type="SMR" id="B7PBI5"/>
<dbReference type="FunCoup" id="B7PBI5">
    <property type="interactions" value="223"/>
</dbReference>
<dbReference type="STRING" id="6945.B7PBI5"/>
<dbReference type="PaxDb" id="6945-B7PBI5"/>
<dbReference type="EnsemblMetazoa" id="ISCW003308-RA">
    <property type="protein sequence ID" value="ISCW003308-PA"/>
    <property type="gene ID" value="ISCW003308"/>
</dbReference>
<dbReference type="KEGG" id="isc:8027421"/>
<dbReference type="VEuPathDB" id="VectorBase:ISCI003308"/>
<dbReference type="VEuPathDB" id="VectorBase:ISCP_016060"/>
<dbReference type="VEuPathDB" id="VectorBase:ISCW003308"/>
<dbReference type="HOGENOM" id="CLU_030651_3_0_1"/>
<dbReference type="InParanoid" id="B7PBI5"/>
<dbReference type="OrthoDB" id="8110916at2759"/>
<dbReference type="PhylomeDB" id="B7PBI5"/>
<dbReference type="Proteomes" id="UP000001555">
    <property type="component" value="Unassembled WGS sequence"/>
</dbReference>
<dbReference type="GO" id="GO:0005524">
    <property type="term" value="F:ATP binding"/>
    <property type="evidence" value="ECO:0007669"/>
    <property type="project" value="UniProtKB-KW"/>
</dbReference>
<dbReference type="GO" id="GO:0047453">
    <property type="term" value="F:ATP-dependent NAD(P)H-hydrate dehydratase activity"/>
    <property type="evidence" value="ECO:0000318"/>
    <property type="project" value="GO_Central"/>
</dbReference>
<dbReference type="GO" id="GO:0110051">
    <property type="term" value="P:metabolite repair"/>
    <property type="evidence" value="ECO:0000318"/>
    <property type="project" value="GO_Central"/>
</dbReference>
<dbReference type="GO" id="GO:0046496">
    <property type="term" value="P:nicotinamide nucleotide metabolic process"/>
    <property type="evidence" value="ECO:0007669"/>
    <property type="project" value="UniProtKB-UniRule"/>
</dbReference>
<dbReference type="CDD" id="cd01171">
    <property type="entry name" value="YXKO-related"/>
    <property type="match status" value="1"/>
</dbReference>
<dbReference type="FunFam" id="3.40.1190.20:FF:000023">
    <property type="entry name" value="ATP-dependent (S)-NAD(P)H-hydrate dehydratase"/>
    <property type="match status" value="1"/>
</dbReference>
<dbReference type="Gene3D" id="3.40.1190.20">
    <property type="match status" value="1"/>
</dbReference>
<dbReference type="HAMAP" id="MF_01965">
    <property type="entry name" value="NADHX_dehydratase"/>
    <property type="match status" value="1"/>
</dbReference>
<dbReference type="InterPro" id="IPR017953">
    <property type="entry name" value="Carbohydrate_kinase_pred_CS"/>
</dbReference>
<dbReference type="InterPro" id="IPR000631">
    <property type="entry name" value="CARKD"/>
</dbReference>
<dbReference type="InterPro" id="IPR029056">
    <property type="entry name" value="Ribokinase-like"/>
</dbReference>
<dbReference type="NCBIfam" id="TIGR00196">
    <property type="entry name" value="yjeF_cterm"/>
    <property type="match status" value="1"/>
</dbReference>
<dbReference type="PANTHER" id="PTHR12592:SF0">
    <property type="entry name" value="ATP-DEPENDENT (S)-NAD(P)H-HYDRATE DEHYDRATASE"/>
    <property type="match status" value="1"/>
</dbReference>
<dbReference type="PANTHER" id="PTHR12592">
    <property type="entry name" value="ATP-DEPENDENT (S)-NAD(P)H-HYDRATE DEHYDRATASE FAMILY MEMBER"/>
    <property type="match status" value="1"/>
</dbReference>
<dbReference type="Pfam" id="PF01256">
    <property type="entry name" value="Carb_kinase"/>
    <property type="match status" value="1"/>
</dbReference>
<dbReference type="SUPFAM" id="SSF53613">
    <property type="entry name" value="Ribokinase-like"/>
    <property type="match status" value="1"/>
</dbReference>
<dbReference type="PROSITE" id="PS01049">
    <property type="entry name" value="YJEF_C_1"/>
    <property type="match status" value="1"/>
</dbReference>
<dbReference type="PROSITE" id="PS51383">
    <property type="entry name" value="YJEF_C_3"/>
    <property type="match status" value="1"/>
</dbReference>
<evidence type="ECO:0000255" key="1">
    <source>
        <dbReference type="HAMAP-Rule" id="MF_03157"/>
    </source>
</evidence>
<proteinExistence type="inferred from homology"/>
<comment type="function">
    <text evidence="1">Catalyzes the dehydration of the S-form of NAD(P)HX at the expense of ATP, which is converted to ADP. Together with NAD(P)HX epimerase, which catalyzes the epimerization of the S- and R-forms, the enzyme allows the repair of both epimers of NAD(P)HX, a damaged form of NAD(P)H that is a result of enzymatic or heat-dependent hydration.</text>
</comment>
<comment type="catalytic activity">
    <reaction evidence="1">
        <text>(6S)-NADHX + ATP = ADP + phosphate + NADH + H(+)</text>
        <dbReference type="Rhea" id="RHEA:19017"/>
        <dbReference type="ChEBI" id="CHEBI:15378"/>
        <dbReference type="ChEBI" id="CHEBI:30616"/>
        <dbReference type="ChEBI" id="CHEBI:43474"/>
        <dbReference type="ChEBI" id="CHEBI:57945"/>
        <dbReference type="ChEBI" id="CHEBI:64074"/>
        <dbReference type="ChEBI" id="CHEBI:456216"/>
        <dbReference type="EC" id="4.2.1.93"/>
    </reaction>
</comment>
<comment type="catalytic activity">
    <reaction>
        <text>(6S)-NADPHX + ATP = ADP + phosphate + NADPH + H(+)</text>
        <dbReference type="Rhea" id="RHEA:32231"/>
        <dbReference type="ChEBI" id="CHEBI:15378"/>
        <dbReference type="ChEBI" id="CHEBI:30616"/>
        <dbReference type="ChEBI" id="CHEBI:43474"/>
        <dbReference type="ChEBI" id="CHEBI:57783"/>
        <dbReference type="ChEBI" id="CHEBI:64076"/>
        <dbReference type="ChEBI" id="CHEBI:456216"/>
        <dbReference type="EC" id="4.2.1.93"/>
    </reaction>
</comment>
<comment type="cofactor">
    <cofactor evidence="1">
        <name>Mg(2+)</name>
        <dbReference type="ChEBI" id="CHEBI:18420"/>
    </cofactor>
</comment>
<comment type="similarity">
    <text evidence="1">Belongs to the NnrD/CARKD family.</text>
</comment>
<name>NNRD_IXOSC</name>
<accession>B7PBI5</accession>
<gene>
    <name type="ORF">ISCW003308</name>
</gene>
<organism>
    <name type="scientific">Ixodes scapularis</name>
    <name type="common">Black-legged tick</name>
    <name type="synonym">Deer tick</name>
    <dbReference type="NCBI Taxonomy" id="6945"/>
    <lineage>
        <taxon>Eukaryota</taxon>
        <taxon>Metazoa</taxon>
        <taxon>Ecdysozoa</taxon>
        <taxon>Arthropoda</taxon>
        <taxon>Chelicerata</taxon>
        <taxon>Arachnida</taxon>
        <taxon>Acari</taxon>
        <taxon>Parasitiformes</taxon>
        <taxon>Ixodida</taxon>
        <taxon>Ixodoidea</taxon>
        <taxon>Ixodidae</taxon>
        <taxon>Ixodinae</taxon>
        <taxon>Ixodes</taxon>
    </lineage>
</organism>
<sequence>MVPHVPEGCSVQQQLVCSVIPPLNSERRKGQAGRVGIVGGSAEYTGAPYFAAMAALRTGADLVHVFCHPSAATAIKAYSPELIVHPTLDAAVTCLPRLHAVVVGPGLGRDVEASWMPTLFNRIREQGLPVVVDADGLFYVTQNPDLVRGYSRAILTPNAVELDRLYRAVLGSPPRENAVPELARALGHVTVLAKGSEDIISDGHRLLRCTEQGSPRRCGGQGDLVSGSLALFAFWSHSAHDTPGEASKRQNSEYGPAMIAALGAAMLVRRCGRLAFQKMARSTLSSDMLAEVRTAFSMLFPVD</sequence>